<keyword id="KW-0249">Electron transport</keyword>
<keyword id="KW-0349">Heme</keyword>
<keyword id="KW-0408">Iron</keyword>
<keyword id="KW-0472">Membrane</keyword>
<keyword id="KW-0479">Metal-binding</keyword>
<keyword id="KW-0496">Mitochondrion</keyword>
<keyword id="KW-0999">Mitochondrion inner membrane</keyword>
<keyword id="KW-1185">Reference proteome</keyword>
<keyword id="KW-0679">Respiratory chain</keyword>
<keyword id="KW-0812">Transmembrane</keyword>
<keyword id="KW-1133">Transmembrane helix</keyword>
<keyword id="KW-0813">Transport</keyword>
<keyword id="KW-0830">Ubiquinone</keyword>
<sequence length="379" mass="42786">MTNIRKTHPLLKIVNHSLIDLPAPSNISAWWNFGSLLGLCLMIQIFTGLFLAMHYTSDTTTAFSSVTHICRDVNYGWLIRYLHANGASMFFICLYMHVGRGIYYGSYTYLETWNIGIILLFAVMATAFMGYVLPWGQMSFWGATVITNLLSAIPYIGTTLVEWIWGGFSVDKATLTRFFAFHFILPFIIATLVLIHLLFLHETGSNNPTGIPSNSDKIPFHPYYTIKDTLGFLVAILLLLILVLFSPDLLGDPDNYTPANPLNTPPHIKPEWYFLFAYAILRSIPNKLGGVLALVLSILVLAFIPFLHMSKQRSMMFRPISQVLFWVLVADLLTLTWIGGQPVEHPFITIGQVASVLYFTTILILMPLASLIENKILKW</sequence>
<geneLocation type="mitochondrion"/>
<reference key="1">
    <citation type="journal article" date="1994" name="J. Mammal. Evol.">
        <title>Cytochrome b gene of marine mammals: phylogeny and evolution.</title>
        <authorList>
            <person name="Irwin D.M."/>
            <person name="Arnason U."/>
        </authorList>
    </citation>
    <scope>NUCLEOTIDE SEQUENCE [GENOMIC DNA]</scope>
</reference>
<reference key="2">
    <citation type="journal article" date="1998" name="Genomics">
        <title>The complete mitochondrial DNA sequence of the rabbit, Oryctolagus cuniculus.</title>
        <authorList>
            <person name="Gissi C."/>
            <person name="Gullberg A."/>
            <person name="Arnason U."/>
        </authorList>
    </citation>
    <scope>NUCLEOTIDE SEQUENCE [LARGE SCALE GENOMIC DNA]</scope>
    <source>
        <strain evidence="6">Thorbecke</strain>
    </source>
</reference>
<reference key="3">
    <citation type="journal article" date="1990" name="Eur. J. Biochem.">
        <title>Direct repeats in the non-coding region of rabbit mitochondrial DNA. Involvement in the generation of intra- and inter-individual heterogeneity.</title>
        <authorList>
            <person name="Mignotte F."/>
            <person name="Gueride M."/>
            <person name="Champagne A.M."/>
            <person name="Mounolou J.C."/>
        </authorList>
    </citation>
    <scope>NUCLEOTIDE SEQUENCE [GENOMIC DNA] OF 211-379</scope>
</reference>
<proteinExistence type="inferred from homology"/>
<gene>
    <name type="primary">MT-CYB</name>
    <name type="synonym">COB</name>
    <name type="synonym">CYTB</name>
    <name type="synonym">MTCYB</name>
</gene>
<accession>P34863</accession>
<accession>O79439</accession>
<accession>Q36607</accession>
<dbReference type="EMBL" id="U07566">
    <property type="protein sequence ID" value="AAA19919.1"/>
    <property type="molecule type" value="Genomic_DNA"/>
</dbReference>
<dbReference type="EMBL" id="AJ001588">
    <property type="protein sequence ID" value="CAA04859.1"/>
    <property type="molecule type" value="Genomic_DNA"/>
</dbReference>
<dbReference type="EMBL" id="X54172">
    <property type="protein sequence ID" value="CAA38105.1"/>
    <property type="molecule type" value="Genomic_DNA"/>
</dbReference>
<dbReference type="PIR" id="T11492">
    <property type="entry name" value="T11492"/>
</dbReference>
<dbReference type="RefSeq" id="NP_007561.1">
    <property type="nucleotide sequence ID" value="NC_001913.1"/>
</dbReference>
<dbReference type="SMR" id="P34863"/>
<dbReference type="FunCoup" id="P34863">
    <property type="interactions" value="58"/>
</dbReference>
<dbReference type="STRING" id="9986.ENSOCUP00000026191"/>
<dbReference type="PaxDb" id="9986-ENSOCUP00000026191"/>
<dbReference type="Ensembl" id="ENSOCUT00000033140.1">
    <property type="protein sequence ID" value="ENSOCUP00000026191.1"/>
    <property type="gene ID" value="ENSOCUG00000029115.1"/>
</dbReference>
<dbReference type="GeneID" id="808227"/>
<dbReference type="KEGG" id="ocu:808227"/>
<dbReference type="CTD" id="4519"/>
<dbReference type="eggNOG" id="KOG4663">
    <property type="taxonomic scope" value="Eukaryota"/>
</dbReference>
<dbReference type="GeneTree" id="ENSGT00390000017948"/>
<dbReference type="HOGENOM" id="CLU_031114_3_0_1"/>
<dbReference type="InParanoid" id="P34863"/>
<dbReference type="OMA" id="NISAWWN"/>
<dbReference type="OrthoDB" id="244at2759"/>
<dbReference type="TreeFam" id="TF353088"/>
<dbReference type="Proteomes" id="UP000001811">
    <property type="component" value="Mitochondrion"/>
</dbReference>
<dbReference type="Bgee" id="ENSOCUG00000029115">
    <property type="expression patterns" value="Expressed in heart and 17 other cell types or tissues"/>
</dbReference>
<dbReference type="ExpressionAtlas" id="P34863">
    <property type="expression patterns" value="baseline"/>
</dbReference>
<dbReference type="GO" id="GO:0005743">
    <property type="term" value="C:mitochondrial inner membrane"/>
    <property type="evidence" value="ECO:0007669"/>
    <property type="project" value="UniProtKB-SubCell"/>
</dbReference>
<dbReference type="GO" id="GO:0045275">
    <property type="term" value="C:respiratory chain complex III"/>
    <property type="evidence" value="ECO:0007669"/>
    <property type="project" value="Ensembl"/>
</dbReference>
<dbReference type="GO" id="GO:0046872">
    <property type="term" value="F:metal ion binding"/>
    <property type="evidence" value="ECO:0007669"/>
    <property type="project" value="UniProtKB-KW"/>
</dbReference>
<dbReference type="GO" id="GO:0008121">
    <property type="term" value="F:ubiquinol-cytochrome-c reductase activity"/>
    <property type="evidence" value="ECO:0007669"/>
    <property type="project" value="InterPro"/>
</dbReference>
<dbReference type="GO" id="GO:0006122">
    <property type="term" value="P:mitochondrial electron transport, ubiquinol to cytochrome c"/>
    <property type="evidence" value="ECO:0007669"/>
    <property type="project" value="TreeGrafter"/>
</dbReference>
<dbReference type="CDD" id="cd00290">
    <property type="entry name" value="cytochrome_b_C"/>
    <property type="match status" value="1"/>
</dbReference>
<dbReference type="CDD" id="cd00284">
    <property type="entry name" value="Cytochrome_b_N"/>
    <property type="match status" value="1"/>
</dbReference>
<dbReference type="FunFam" id="1.20.810.10:FF:000002">
    <property type="entry name" value="Cytochrome b"/>
    <property type="match status" value="1"/>
</dbReference>
<dbReference type="Gene3D" id="1.20.810.10">
    <property type="entry name" value="Cytochrome Bc1 Complex, Chain C"/>
    <property type="match status" value="1"/>
</dbReference>
<dbReference type="InterPro" id="IPR005798">
    <property type="entry name" value="Cyt_b/b6_C"/>
</dbReference>
<dbReference type="InterPro" id="IPR036150">
    <property type="entry name" value="Cyt_b/b6_C_sf"/>
</dbReference>
<dbReference type="InterPro" id="IPR005797">
    <property type="entry name" value="Cyt_b/b6_N"/>
</dbReference>
<dbReference type="InterPro" id="IPR027387">
    <property type="entry name" value="Cytb/b6-like_sf"/>
</dbReference>
<dbReference type="InterPro" id="IPR030689">
    <property type="entry name" value="Cytochrome_b"/>
</dbReference>
<dbReference type="InterPro" id="IPR048260">
    <property type="entry name" value="Cytochrome_b_C_euk/bac"/>
</dbReference>
<dbReference type="InterPro" id="IPR048259">
    <property type="entry name" value="Cytochrome_b_N_euk/bac"/>
</dbReference>
<dbReference type="InterPro" id="IPR016174">
    <property type="entry name" value="Di-haem_cyt_TM"/>
</dbReference>
<dbReference type="PANTHER" id="PTHR19271">
    <property type="entry name" value="CYTOCHROME B"/>
    <property type="match status" value="1"/>
</dbReference>
<dbReference type="PANTHER" id="PTHR19271:SF16">
    <property type="entry name" value="CYTOCHROME B"/>
    <property type="match status" value="1"/>
</dbReference>
<dbReference type="Pfam" id="PF00032">
    <property type="entry name" value="Cytochrom_B_C"/>
    <property type="match status" value="1"/>
</dbReference>
<dbReference type="Pfam" id="PF00033">
    <property type="entry name" value="Cytochrome_B"/>
    <property type="match status" value="1"/>
</dbReference>
<dbReference type="PIRSF" id="PIRSF038885">
    <property type="entry name" value="COB"/>
    <property type="match status" value="1"/>
</dbReference>
<dbReference type="SUPFAM" id="SSF81648">
    <property type="entry name" value="a domain/subunit of cytochrome bc1 complex (Ubiquinol-cytochrome c reductase)"/>
    <property type="match status" value="1"/>
</dbReference>
<dbReference type="SUPFAM" id="SSF81342">
    <property type="entry name" value="Transmembrane di-heme cytochromes"/>
    <property type="match status" value="1"/>
</dbReference>
<dbReference type="PROSITE" id="PS51003">
    <property type="entry name" value="CYTB_CTER"/>
    <property type="match status" value="1"/>
</dbReference>
<dbReference type="PROSITE" id="PS51002">
    <property type="entry name" value="CYTB_NTER"/>
    <property type="match status" value="1"/>
</dbReference>
<comment type="function">
    <text evidence="2">Component of the ubiquinol-cytochrome c reductase complex (complex III or cytochrome b-c1 complex) that is part of the mitochondrial respiratory chain. The b-c1 complex mediates electron transfer from ubiquinol to cytochrome c. Contributes to the generation of a proton gradient across the mitochondrial membrane that is then used for ATP synthesis.</text>
</comment>
<comment type="cofactor">
    <cofactor evidence="2">
        <name>heme b</name>
        <dbReference type="ChEBI" id="CHEBI:60344"/>
    </cofactor>
    <text evidence="2">Binds 2 heme b groups non-covalently.</text>
</comment>
<comment type="subunit">
    <text evidence="2">The cytochrome bc1 complex contains 11 subunits: 3 respiratory subunits (MT-CYB, CYC1 and UQCRFS1), 2 core proteins (UQCRC1 and UQCRC2) and 6 low-molecular weight proteins (UQCRH/QCR6, UQCRB/QCR7, UQCRQ/QCR8, UQCR10/QCR9, UQCR11/QCR10 and a cleavage product of UQCRFS1). This cytochrome bc1 complex then forms a dimer.</text>
</comment>
<comment type="subcellular location">
    <subcellularLocation>
        <location evidence="2">Mitochondrion inner membrane</location>
        <topology evidence="2">Multi-pass membrane protein</topology>
    </subcellularLocation>
</comment>
<comment type="miscellaneous">
    <text evidence="1">Heme 1 (or BL or b562) is low-potential and absorbs at about 562 nm, and heme 2 (or BH or b566) is high-potential and absorbs at about 566 nm.</text>
</comment>
<comment type="similarity">
    <text evidence="3 4">Belongs to the cytochrome b family.</text>
</comment>
<comment type="caution">
    <text evidence="2">The full-length protein contains only eight transmembrane helices, not nine as predicted by bioinformatics tools.</text>
</comment>
<name>CYB_RABIT</name>
<evidence type="ECO:0000250" key="1"/>
<evidence type="ECO:0000250" key="2">
    <source>
        <dbReference type="UniProtKB" id="P00157"/>
    </source>
</evidence>
<evidence type="ECO:0000255" key="3">
    <source>
        <dbReference type="PROSITE-ProRule" id="PRU00967"/>
    </source>
</evidence>
<evidence type="ECO:0000255" key="4">
    <source>
        <dbReference type="PROSITE-ProRule" id="PRU00968"/>
    </source>
</evidence>
<evidence type="ECO:0000305" key="5"/>
<evidence type="ECO:0000312" key="6">
    <source>
        <dbReference type="Proteomes" id="UP000001811"/>
    </source>
</evidence>
<feature type="chain" id="PRO_0000061480" description="Cytochrome b">
    <location>
        <begin position="1"/>
        <end position="379"/>
    </location>
</feature>
<feature type="transmembrane region" description="Helical" evidence="2">
    <location>
        <begin position="33"/>
        <end position="53"/>
    </location>
</feature>
<feature type="transmembrane region" description="Helical" evidence="2">
    <location>
        <begin position="77"/>
        <end position="98"/>
    </location>
</feature>
<feature type="transmembrane region" description="Helical" evidence="2">
    <location>
        <begin position="113"/>
        <end position="133"/>
    </location>
</feature>
<feature type="transmembrane region" description="Helical" evidence="2">
    <location>
        <begin position="178"/>
        <end position="198"/>
    </location>
</feature>
<feature type="transmembrane region" description="Helical" evidence="2">
    <location>
        <begin position="226"/>
        <end position="246"/>
    </location>
</feature>
<feature type="transmembrane region" description="Helical" evidence="2">
    <location>
        <begin position="288"/>
        <end position="308"/>
    </location>
</feature>
<feature type="transmembrane region" description="Helical" evidence="2">
    <location>
        <begin position="320"/>
        <end position="340"/>
    </location>
</feature>
<feature type="transmembrane region" description="Helical" evidence="2">
    <location>
        <begin position="347"/>
        <end position="367"/>
    </location>
</feature>
<feature type="binding site" description="axial binding residue" evidence="2">
    <location>
        <position position="83"/>
    </location>
    <ligand>
        <name>heme b</name>
        <dbReference type="ChEBI" id="CHEBI:60344"/>
        <label>b562</label>
    </ligand>
    <ligandPart>
        <name>Fe</name>
        <dbReference type="ChEBI" id="CHEBI:18248"/>
    </ligandPart>
</feature>
<feature type="binding site" description="axial binding residue" evidence="2">
    <location>
        <position position="97"/>
    </location>
    <ligand>
        <name>heme b</name>
        <dbReference type="ChEBI" id="CHEBI:60344"/>
        <label>b566</label>
    </ligand>
    <ligandPart>
        <name>Fe</name>
        <dbReference type="ChEBI" id="CHEBI:18248"/>
    </ligandPart>
</feature>
<feature type="binding site" description="axial binding residue" evidence="2">
    <location>
        <position position="182"/>
    </location>
    <ligand>
        <name>heme b</name>
        <dbReference type="ChEBI" id="CHEBI:60344"/>
        <label>b562</label>
    </ligand>
    <ligandPart>
        <name>Fe</name>
        <dbReference type="ChEBI" id="CHEBI:18248"/>
    </ligandPart>
</feature>
<feature type="binding site" description="axial binding residue" evidence="2">
    <location>
        <position position="196"/>
    </location>
    <ligand>
        <name>heme b</name>
        <dbReference type="ChEBI" id="CHEBI:60344"/>
        <label>b566</label>
    </ligand>
    <ligandPart>
        <name>Fe</name>
        <dbReference type="ChEBI" id="CHEBI:18248"/>
    </ligandPart>
</feature>
<feature type="binding site" evidence="2">
    <location>
        <position position="201"/>
    </location>
    <ligand>
        <name>a ubiquinone</name>
        <dbReference type="ChEBI" id="CHEBI:16389"/>
    </ligand>
</feature>
<feature type="sequence conflict" description="In Ref. 1; AAA19919." evidence="5" ref="1">
    <original>M</original>
    <variation>I</variation>
    <location>
        <position position="129"/>
    </location>
</feature>
<feature type="sequence conflict" description="In Ref. 1; AAA19919." evidence="5" ref="1">
    <original>F</original>
    <variation>L</variation>
    <location>
        <position position="140"/>
    </location>
</feature>
<feature type="sequence conflict" description="In Ref. 1; AAA19919." evidence="5" ref="1">
    <original>T</original>
    <variation>S</variation>
    <location>
        <position position="360"/>
    </location>
</feature>
<protein>
    <recommendedName>
        <fullName>Cytochrome b</fullName>
    </recommendedName>
    <alternativeName>
        <fullName>Complex III subunit 3</fullName>
    </alternativeName>
    <alternativeName>
        <fullName>Complex III subunit III</fullName>
    </alternativeName>
    <alternativeName>
        <fullName>Cytochrome b-c1 complex subunit 3</fullName>
    </alternativeName>
    <alternativeName>
        <fullName>Ubiquinol-cytochrome-c reductase complex cytochrome b subunit</fullName>
    </alternativeName>
</protein>
<organism>
    <name type="scientific">Oryctolagus cuniculus</name>
    <name type="common">Rabbit</name>
    <dbReference type="NCBI Taxonomy" id="9986"/>
    <lineage>
        <taxon>Eukaryota</taxon>
        <taxon>Metazoa</taxon>
        <taxon>Chordata</taxon>
        <taxon>Craniata</taxon>
        <taxon>Vertebrata</taxon>
        <taxon>Euteleostomi</taxon>
        <taxon>Mammalia</taxon>
        <taxon>Eutheria</taxon>
        <taxon>Euarchontoglires</taxon>
        <taxon>Glires</taxon>
        <taxon>Lagomorpha</taxon>
        <taxon>Leporidae</taxon>
        <taxon>Oryctolagus</taxon>
    </lineage>
</organism>